<dbReference type="EMBL" id="BX883046">
    <property type="protein sequence ID" value="CAE83998.1"/>
    <property type="molecule type" value="Genomic_DNA"/>
</dbReference>
<dbReference type="RefSeq" id="NP_997627.1">
    <property type="nucleotide sequence ID" value="NM_212462.2"/>
</dbReference>
<dbReference type="RefSeq" id="XP_006256114.1">
    <property type="nucleotide sequence ID" value="XM_006256052.5"/>
</dbReference>
<dbReference type="SMR" id="Q6MG48"/>
<dbReference type="BioGRID" id="254634">
    <property type="interactions" value="1"/>
</dbReference>
<dbReference type="FunCoup" id="Q6MG48">
    <property type="interactions" value="2508"/>
</dbReference>
<dbReference type="IntAct" id="Q6MG48">
    <property type="interactions" value="2"/>
</dbReference>
<dbReference type="MINT" id="Q6MG48"/>
<dbReference type="STRING" id="10116.ENSRNOP00000075873"/>
<dbReference type="GlyGen" id="Q6MG48">
    <property type="glycosylation" value="11 sites"/>
</dbReference>
<dbReference type="iPTMnet" id="Q6MG48"/>
<dbReference type="PhosphoSitePlus" id="Q6MG48"/>
<dbReference type="jPOST" id="Q6MG48"/>
<dbReference type="PaxDb" id="10116-ENSRNOP00000001133"/>
<dbReference type="GeneID" id="294250"/>
<dbReference type="KEGG" id="rno:294250"/>
<dbReference type="UCSC" id="RGD:1303025">
    <property type="organism name" value="rat"/>
</dbReference>
<dbReference type="AGR" id="RGD:1303025"/>
<dbReference type="CTD" id="7916"/>
<dbReference type="RGD" id="1303025">
    <property type="gene designation" value="Prrc2a"/>
</dbReference>
<dbReference type="VEuPathDB" id="HostDB:ENSRNOG00000000852"/>
<dbReference type="eggNOG" id="KOG4817">
    <property type="taxonomic scope" value="Eukaryota"/>
</dbReference>
<dbReference type="HOGENOM" id="CLU_001247_1_0_1"/>
<dbReference type="InParanoid" id="Q6MG48"/>
<dbReference type="PhylomeDB" id="Q6MG48"/>
<dbReference type="PRO" id="PR:Q6MG48"/>
<dbReference type="Proteomes" id="UP000002494">
    <property type="component" value="Chromosome 20"/>
</dbReference>
<dbReference type="Bgee" id="ENSRNOG00000000852">
    <property type="expression patterns" value="Expressed in thymus and 20 other cell types or tissues"/>
</dbReference>
<dbReference type="ExpressionAtlas" id="Q6MG48">
    <property type="expression patterns" value="baseline and differential"/>
</dbReference>
<dbReference type="GO" id="GO:0005737">
    <property type="term" value="C:cytoplasm"/>
    <property type="evidence" value="ECO:0007669"/>
    <property type="project" value="UniProtKB-SubCell"/>
</dbReference>
<dbReference type="GO" id="GO:0005634">
    <property type="term" value="C:nucleus"/>
    <property type="evidence" value="ECO:0007669"/>
    <property type="project" value="UniProtKB-SubCell"/>
</dbReference>
<dbReference type="GO" id="GO:0030154">
    <property type="term" value="P:cell differentiation"/>
    <property type="evidence" value="ECO:0000318"/>
    <property type="project" value="GO_Central"/>
</dbReference>
<dbReference type="InterPro" id="IPR009738">
    <property type="entry name" value="BAT2_N"/>
</dbReference>
<dbReference type="InterPro" id="IPR033184">
    <property type="entry name" value="PRRC2"/>
</dbReference>
<dbReference type="PANTHER" id="PTHR14038">
    <property type="entry name" value="BAT2 HLA-B-ASSOCIATED TRANSCRIPT 2"/>
    <property type="match status" value="1"/>
</dbReference>
<dbReference type="PANTHER" id="PTHR14038:SF5">
    <property type="entry name" value="PROTEIN PRRC2A"/>
    <property type="match status" value="1"/>
</dbReference>
<dbReference type="Pfam" id="PF07001">
    <property type="entry name" value="BAT2_N"/>
    <property type="match status" value="1"/>
</dbReference>
<gene>
    <name type="primary">Prrc2a</name>
    <name type="synonym">Bat2</name>
</gene>
<feature type="chain" id="PRO_0000064832" description="Protein PRRC2A">
    <location>
        <begin position="1"/>
        <end position="2161"/>
    </location>
</feature>
<feature type="repeat" description="1-1">
    <location>
        <begin position="41"/>
        <end position="95"/>
    </location>
</feature>
<feature type="repeat" description="1-2">
    <location>
        <begin position="98"/>
        <end position="154"/>
    </location>
</feature>
<feature type="repeat" description="1-3">
    <location>
        <begin position="281"/>
        <end position="336"/>
    </location>
</feature>
<feature type="repeat" description="2-1">
    <location>
        <begin position="337"/>
        <end position="429"/>
    </location>
</feature>
<feature type="repeat" description="2-2">
    <location>
        <begin position="487"/>
        <end position="560"/>
    </location>
</feature>
<feature type="repeat" description="1-4">
    <location>
        <begin position="1760"/>
        <end position="1815"/>
    </location>
</feature>
<feature type="repeat" description="3-1">
    <location>
        <begin position="1920"/>
        <end position="1969"/>
    </location>
</feature>
<feature type="repeat" description="3-2">
    <location>
        <begin position="1986"/>
        <end position="2035"/>
    </location>
</feature>
<feature type="repeat" description="3-3">
    <location>
        <begin position="2061"/>
        <end position="2110"/>
    </location>
</feature>
<feature type="region of interest" description="Disordered" evidence="4">
    <location>
        <begin position="1"/>
        <end position="20"/>
    </location>
</feature>
<feature type="region of interest" description="4 X 57 AA type A repeats">
    <location>
        <begin position="41"/>
        <end position="1815"/>
    </location>
</feature>
<feature type="region of interest" description="Disordered" evidence="4">
    <location>
        <begin position="49"/>
        <end position="716"/>
    </location>
</feature>
<feature type="region of interest" description="2 X type B repeats">
    <location>
        <begin position="337"/>
        <end position="560"/>
    </location>
</feature>
<feature type="region of interest" description="Disordered" evidence="4">
    <location>
        <begin position="738"/>
        <end position="1774"/>
    </location>
</feature>
<feature type="region of interest" description="Disordered" evidence="4">
    <location>
        <begin position="1806"/>
        <end position="1886"/>
    </location>
</feature>
<feature type="region of interest" description="3 X 50 AA type C repeats">
    <location>
        <begin position="1920"/>
        <end position="2110"/>
    </location>
</feature>
<feature type="region of interest" description="Disordered" evidence="4">
    <location>
        <begin position="1948"/>
        <end position="1978"/>
    </location>
</feature>
<feature type="region of interest" description="Disordered" evidence="4">
    <location>
        <begin position="2024"/>
        <end position="2049"/>
    </location>
</feature>
<feature type="region of interest" description="Disordered" evidence="4">
    <location>
        <begin position="2065"/>
        <end position="2161"/>
    </location>
</feature>
<feature type="compositionally biased region" description="Polar residues" evidence="4">
    <location>
        <begin position="98"/>
        <end position="122"/>
    </location>
</feature>
<feature type="compositionally biased region" description="Basic and acidic residues" evidence="4">
    <location>
        <begin position="178"/>
        <end position="189"/>
    </location>
</feature>
<feature type="compositionally biased region" description="Polar residues" evidence="4">
    <location>
        <begin position="190"/>
        <end position="207"/>
    </location>
</feature>
<feature type="compositionally biased region" description="Basic and acidic residues" evidence="4">
    <location>
        <begin position="210"/>
        <end position="232"/>
    </location>
</feature>
<feature type="compositionally biased region" description="Pro residues" evidence="4">
    <location>
        <begin position="253"/>
        <end position="267"/>
    </location>
</feature>
<feature type="compositionally biased region" description="Basic and acidic residues" evidence="4">
    <location>
        <begin position="306"/>
        <end position="316"/>
    </location>
</feature>
<feature type="compositionally biased region" description="Basic and acidic residues" evidence="4">
    <location>
        <begin position="329"/>
        <end position="342"/>
    </location>
</feature>
<feature type="compositionally biased region" description="Acidic residues" evidence="4">
    <location>
        <begin position="343"/>
        <end position="354"/>
    </location>
</feature>
<feature type="compositionally biased region" description="Pro residues" evidence="4">
    <location>
        <begin position="402"/>
        <end position="416"/>
    </location>
</feature>
<feature type="compositionally biased region" description="Basic and acidic residues" evidence="4">
    <location>
        <begin position="469"/>
        <end position="505"/>
    </location>
</feature>
<feature type="compositionally biased region" description="Pro residues" evidence="4">
    <location>
        <begin position="508"/>
        <end position="540"/>
    </location>
</feature>
<feature type="compositionally biased region" description="Low complexity" evidence="4">
    <location>
        <begin position="575"/>
        <end position="588"/>
    </location>
</feature>
<feature type="compositionally biased region" description="Pro residues" evidence="4">
    <location>
        <begin position="603"/>
        <end position="614"/>
    </location>
</feature>
<feature type="compositionally biased region" description="Low complexity" evidence="4">
    <location>
        <begin position="643"/>
        <end position="673"/>
    </location>
</feature>
<feature type="compositionally biased region" description="Pro residues" evidence="4">
    <location>
        <begin position="674"/>
        <end position="685"/>
    </location>
</feature>
<feature type="compositionally biased region" description="Pro residues" evidence="4">
    <location>
        <begin position="694"/>
        <end position="703"/>
    </location>
</feature>
<feature type="compositionally biased region" description="Basic and acidic residues" evidence="4">
    <location>
        <begin position="769"/>
        <end position="782"/>
    </location>
</feature>
<feature type="compositionally biased region" description="Pro residues" evidence="4">
    <location>
        <begin position="862"/>
        <end position="872"/>
    </location>
</feature>
<feature type="compositionally biased region" description="Basic and acidic residues" evidence="4">
    <location>
        <begin position="885"/>
        <end position="894"/>
    </location>
</feature>
<feature type="compositionally biased region" description="Basic and acidic residues" evidence="4">
    <location>
        <begin position="920"/>
        <end position="930"/>
    </location>
</feature>
<feature type="compositionally biased region" description="Basic and acidic residues" evidence="4">
    <location>
        <begin position="978"/>
        <end position="989"/>
    </location>
</feature>
<feature type="compositionally biased region" description="Basic and acidic residues" evidence="4">
    <location>
        <begin position="1053"/>
        <end position="1069"/>
    </location>
</feature>
<feature type="compositionally biased region" description="Basic and acidic residues" evidence="4">
    <location>
        <begin position="1113"/>
        <end position="1129"/>
    </location>
</feature>
<feature type="compositionally biased region" description="Pro residues" evidence="4">
    <location>
        <begin position="1140"/>
        <end position="1152"/>
    </location>
</feature>
<feature type="compositionally biased region" description="Pro residues" evidence="4">
    <location>
        <begin position="1198"/>
        <end position="1209"/>
    </location>
</feature>
<feature type="compositionally biased region" description="Low complexity" evidence="4">
    <location>
        <begin position="1280"/>
        <end position="1295"/>
    </location>
</feature>
<feature type="compositionally biased region" description="Basic and acidic residues" evidence="4">
    <location>
        <begin position="1332"/>
        <end position="1341"/>
    </location>
</feature>
<feature type="compositionally biased region" description="Gly residues" evidence="4">
    <location>
        <begin position="1354"/>
        <end position="1364"/>
    </location>
</feature>
<feature type="compositionally biased region" description="Basic and acidic residues" evidence="4">
    <location>
        <begin position="1374"/>
        <end position="1383"/>
    </location>
</feature>
<feature type="compositionally biased region" description="Gly residues" evidence="4">
    <location>
        <begin position="1401"/>
        <end position="1426"/>
    </location>
</feature>
<feature type="compositionally biased region" description="Pro residues" evidence="4">
    <location>
        <begin position="1448"/>
        <end position="1458"/>
    </location>
</feature>
<feature type="compositionally biased region" description="Polar residues" evidence="4">
    <location>
        <begin position="1479"/>
        <end position="1490"/>
    </location>
</feature>
<feature type="compositionally biased region" description="Pro residues" evidence="4">
    <location>
        <begin position="1500"/>
        <end position="1518"/>
    </location>
</feature>
<feature type="compositionally biased region" description="Polar residues" evidence="4">
    <location>
        <begin position="1615"/>
        <end position="1625"/>
    </location>
</feature>
<feature type="compositionally biased region" description="Polar residues" evidence="4">
    <location>
        <begin position="1645"/>
        <end position="1671"/>
    </location>
</feature>
<feature type="compositionally biased region" description="Basic and acidic residues" evidence="4">
    <location>
        <begin position="1716"/>
        <end position="1727"/>
    </location>
</feature>
<feature type="compositionally biased region" description="Low complexity" evidence="4">
    <location>
        <begin position="2077"/>
        <end position="2089"/>
    </location>
</feature>
<feature type="compositionally biased region" description="Basic and acidic residues" evidence="4">
    <location>
        <begin position="2139"/>
        <end position="2155"/>
    </location>
</feature>
<feature type="modified residue" description="Phosphoserine" evidence="2">
    <location>
        <position position="18"/>
    </location>
</feature>
<feature type="modified residue" description="Phosphoserine" evidence="2">
    <location>
        <position position="19"/>
    </location>
</feature>
<feature type="modified residue" description="N6-acetyllysine" evidence="2">
    <location>
        <position position="27"/>
    </location>
</feature>
<feature type="modified residue" description="Phosphoserine" evidence="2">
    <location>
        <position position="30"/>
    </location>
</feature>
<feature type="modified residue" description="N6-acetyllysine" evidence="3">
    <location>
        <position position="35"/>
    </location>
</feature>
<feature type="modified residue" description="Phosphoserine" evidence="2">
    <location>
        <position position="146"/>
    </location>
</feature>
<feature type="modified residue" description="Phosphoserine" evidence="2">
    <location>
        <position position="166"/>
    </location>
</feature>
<feature type="modified residue" description="Phosphoserine" evidence="2">
    <location>
        <position position="204"/>
    </location>
</feature>
<feature type="modified residue" description="Asymmetric dimethylarginine" evidence="2">
    <location>
        <position position="272"/>
    </location>
</feature>
<feature type="modified residue" description="Omega-N-methylarginine" evidence="2">
    <location>
        <position position="296"/>
    </location>
</feature>
<feature type="modified residue" description="Phosphoserine" evidence="6">
    <location>
        <position position="342"/>
    </location>
</feature>
<feature type="modified residue" description="Phosphoserine" evidence="6">
    <location>
        <position position="350"/>
    </location>
</feature>
<feature type="modified residue" description="Phosphoserine" evidence="2">
    <location>
        <position position="363"/>
    </location>
</feature>
<feature type="modified residue" description="Phosphoserine" evidence="2">
    <location>
        <position position="378"/>
    </location>
</feature>
<feature type="modified residue" description="Phosphoserine" evidence="2">
    <location>
        <position position="381"/>
    </location>
</feature>
<feature type="modified residue" description="Phosphoserine" evidence="2">
    <location>
        <position position="455"/>
    </location>
</feature>
<feature type="modified residue" description="Phosphothreonine" evidence="2">
    <location>
        <position position="609"/>
    </location>
</feature>
<feature type="modified residue" description="Phosphoserine" evidence="2">
    <location>
        <position position="760"/>
    </location>
</feature>
<feature type="modified residue" description="Phosphoserine" evidence="6">
    <location>
        <position position="762"/>
    </location>
</feature>
<feature type="modified residue" description="Phosphoserine" evidence="6">
    <location>
        <position position="765"/>
    </location>
</feature>
<feature type="modified residue" description="Phosphothreonine" evidence="3">
    <location>
        <position position="808"/>
    </location>
</feature>
<feature type="modified residue" description="Phosphoserine" evidence="6">
    <location>
        <position position="809"/>
    </location>
</feature>
<feature type="modified residue" description="Omega-N-methylarginine" evidence="3">
    <location>
        <position position="908"/>
    </location>
</feature>
<feature type="modified residue" description="Phosphoserine" evidence="2">
    <location>
        <position position="936"/>
    </location>
</feature>
<feature type="modified residue" description="Phosphothreonine" evidence="3">
    <location>
        <position position="1000"/>
    </location>
</feature>
<feature type="modified residue" description="Phosphoserine" evidence="6">
    <location>
        <position position="1007"/>
    </location>
</feature>
<feature type="modified residue" description="Omega-N-methylarginine" evidence="3">
    <location>
        <position position="1069"/>
    </location>
</feature>
<feature type="modified residue" description="Phosphothreonine" evidence="2">
    <location>
        <position position="1086"/>
    </location>
</feature>
<feature type="modified residue" description="Phosphoserine" evidence="6">
    <location>
        <position position="1088"/>
    </location>
</feature>
<feature type="modified residue" description="Phosphoserine" evidence="2">
    <location>
        <position position="1092"/>
    </location>
</feature>
<feature type="modified residue" description="Phosphoserine" evidence="2">
    <location>
        <position position="1095"/>
    </location>
</feature>
<feature type="modified residue" description="Phosphotyrosine" evidence="2">
    <location>
        <position position="1097"/>
    </location>
</feature>
<feature type="modified residue" description="Phosphoserine" evidence="2">
    <location>
        <position position="1109"/>
    </location>
</feature>
<feature type="modified residue" description="Phosphoserine" evidence="6">
    <location>
        <position position="1113"/>
    </location>
</feature>
<feature type="modified residue" description="Phosphoserine" evidence="2">
    <location>
        <position position="1123"/>
    </location>
</feature>
<feature type="modified residue" description="Phosphoserine" evidence="6">
    <location>
        <position position="1150"/>
    </location>
</feature>
<feature type="modified residue" description="N6-acetyllysine" evidence="2">
    <location>
        <position position="1199"/>
    </location>
</feature>
<feature type="modified residue" description="Phosphoserine" evidence="6">
    <location>
        <position position="1222"/>
    </location>
</feature>
<feature type="modified residue" description="Phosphoserine" evidence="2">
    <location>
        <position position="1307"/>
    </location>
</feature>
<feature type="modified residue" description="Phosphoserine" evidence="3">
    <location>
        <position position="1311"/>
    </location>
</feature>
<feature type="modified residue" description="Phosphothreonine" evidence="3">
    <location>
        <position position="1324"/>
    </location>
</feature>
<feature type="modified residue" description="Phosphoserine" evidence="3">
    <location>
        <position position="1326"/>
    </location>
</feature>
<feature type="modified residue" description="Phosphoserine" evidence="2">
    <location>
        <position position="1329"/>
    </location>
</feature>
<feature type="modified residue" description="Phosphothreonine" evidence="2">
    <location>
        <position position="1348"/>
    </location>
</feature>
<feature type="modified residue" description="Phosphothreonine" evidence="2">
    <location>
        <position position="1354"/>
    </location>
</feature>
<feature type="modified residue" description="Phosphoserine" evidence="2">
    <location>
        <position position="1385"/>
    </location>
</feature>
<feature type="modified residue" description="Phosphoserine" evidence="2">
    <location>
        <position position="1387"/>
    </location>
</feature>
<feature type="modified residue" description="Phosphothreonine" evidence="5">
    <location>
        <position position="1406"/>
    </location>
</feature>
<feature type="modified residue" description="Phosphoserine" evidence="6">
    <location>
        <position position="1761"/>
    </location>
</feature>
<feature type="modified residue" description="Phosphoserine" evidence="2">
    <location>
        <position position="2040"/>
    </location>
</feature>
<feature type="modified residue" description="Phosphoserine" evidence="2">
    <location>
        <position position="2086"/>
    </location>
</feature>
<feature type="modified residue" description="Phosphoserine" evidence="6">
    <location>
        <position position="2117"/>
    </location>
</feature>
<keyword id="KW-0007">Acetylation</keyword>
<keyword id="KW-0963">Cytoplasm</keyword>
<keyword id="KW-0488">Methylation</keyword>
<keyword id="KW-0539">Nucleus</keyword>
<keyword id="KW-0597">Phosphoprotein</keyword>
<keyword id="KW-1185">Reference proteome</keyword>
<keyword id="KW-0677">Repeat</keyword>
<protein>
    <recommendedName>
        <fullName>Protein PRRC2A</fullName>
    </recommendedName>
    <alternativeName>
        <fullName>HLA-B-associated transcript 2</fullName>
    </alternativeName>
    <alternativeName>
        <fullName>Proline-rich and coiled-coil-containing protein 2A</fullName>
    </alternativeName>
</protein>
<comment type="function">
    <text evidence="1">May play a role in the regulation of pre-mRNA splicing.</text>
</comment>
<comment type="subcellular location">
    <subcellularLocation>
        <location evidence="1">Cytoplasm</location>
    </subcellularLocation>
    <subcellularLocation>
        <location evidence="1">Nucleus</location>
    </subcellularLocation>
</comment>
<accession>Q6MG48</accession>
<name>PRC2A_RAT</name>
<reference key="1">
    <citation type="journal article" date="2004" name="Genome Res.">
        <title>The genomic sequence and comparative analysis of the rat major histocompatibility complex.</title>
        <authorList>
            <person name="Hurt P."/>
            <person name="Walter L."/>
            <person name="Sudbrak R."/>
            <person name="Klages S."/>
            <person name="Mueller I."/>
            <person name="Shiina T."/>
            <person name="Inoko H."/>
            <person name="Lehrach H."/>
            <person name="Guenther E."/>
            <person name="Reinhardt R."/>
            <person name="Himmelbauer H."/>
        </authorList>
    </citation>
    <scope>NUCLEOTIDE SEQUENCE [LARGE SCALE GENOMIC DNA]</scope>
    <source>
        <strain>Brown Norway</strain>
    </source>
</reference>
<reference key="2">
    <citation type="journal article" date="2006" name="Proc. Natl. Acad. Sci. U.S.A.">
        <title>Quantitative phosphoproteomics of vasopressin-sensitive renal cells: regulation of aquaporin-2 phosphorylation at two sites.</title>
        <authorList>
            <person name="Hoffert J.D."/>
            <person name="Pisitkun T."/>
            <person name="Wang G."/>
            <person name="Shen R.-F."/>
            <person name="Knepper M.A."/>
        </authorList>
    </citation>
    <scope>PHOSPHORYLATION [LARGE SCALE ANALYSIS] AT THR-1406</scope>
    <scope>IDENTIFICATION BY MASS SPECTROMETRY [LARGE SCALE ANALYSIS]</scope>
</reference>
<reference key="3">
    <citation type="journal article" date="2012" name="Nat. Commun.">
        <title>Quantitative maps of protein phosphorylation sites across 14 different rat organs and tissues.</title>
        <authorList>
            <person name="Lundby A."/>
            <person name="Secher A."/>
            <person name="Lage K."/>
            <person name="Nordsborg N.B."/>
            <person name="Dmytriyev A."/>
            <person name="Lundby C."/>
            <person name="Olsen J.V."/>
        </authorList>
    </citation>
    <scope>PHOSPHORYLATION [LARGE SCALE ANALYSIS] AT SER-342; SER-350; SER-762; SER-765; SER-809; SER-1007; SER-1088; SER-1113; SER-1150; SER-1222; SER-1761 AND SER-2117</scope>
    <scope>IDENTIFICATION BY MASS SPECTROMETRY [LARGE SCALE ANALYSIS]</scope>
</reference>
<proteinExistence type="evidence at protein level"/>
<sequence length="2161" mass="229047">MSDRSGPTAKGKDGKKYSSLNLFDTYKGKSLEIQKPAVAPRHGLQSLGKVAIARRMPPPANLPSLKAENKGNDPNVSLVPKDGTGWASKQEQSDPKSSDASTAQPPESQPLPASQTPASNQPKRPPTAPENTPSVPSGVKSWAQASVTHGAHGDGGRASSLLSRFSREEFPTLQAAGDQDKAAKERESAEQSSGPGPSLRPQNSTTWRDGGGRGPDELEGPDSKLHHGHDPRGGLQPSGPPQFPPYRGMMPPFMYPPYLPFPPPYGPQGPYRYPTPDGPSRFPRVAGPRGSGPPMRLVEPVGRPSILKEDNLKEFDQLDQENDDGWAGAHEEVDYTEKLKFSDEEDGRDSDEEGAEGHKDSQSAAGEEPETDGKKGTSPGSELPPPKTAWTENSRPSETEPAAPPIPKPPPPPPHRGPVGNWGPPGDYPDRGGPPCKPPAPEDEDEAWRQRRKQSSSEISLAVERARRRREEEERRMQEERRAACAEKLKRLDEKFGAPDKRLKAEPAAPPVTPPAPALPPVVPKETPTPPALPPTPTPTPEKDPEEPAHAPPVQSAPTQAGPPAPTPVSGGGTASSTSSGSFEASPAEPQLPSKEGPEPPEEVPAPTTPPAPKVEPKGDGVGPTRQPPSQGLGYPKYQKSLPPRFQRQQQEQLLKQQQQQQWQQQQQQQGTAPPAPVPPSPPQPVTLGAVPAPQAPPPPPKALYPGALGRPPPMPPMNFDPRWMMIPPYVDPRLLQGRPPLDFYPPGVHPSGLVPRERSDSGGSSSEPFERHAPPLLRERGTPPVDPKLAWVGDVFTTTPTDPRPLTSPLRQAADEEEKSLRSETPPVPPPPPYLANYPGFPENGTPGPPISRFPLEESAPPGPRPLPWPPGNDEAAKMQAPPPKKEPPKEEPAQLSGPEAGRKPARGVGGGGQGPPPPRRENRTETRWGPRPGSCRRGIPPEDPGVPPRRAGPIKKPPPPVKADELPPKSLEPGDETPKAPKPDALKTAKGKVGPKETPAGGNLSPAPRLRRDYSYERVGPTSCRGRGRGEYFARGRGFRGTYGGRGRGARSREFRSYREFRGDDGRGGGSGGTNHPSAPRGRTASETRSEGSEYEEIPKRRRQRGSETGSETHESDLAPSDKEAPPPKEGVLAQVPLAPPQPGAPPSPAPARFSTARGGRVFTPRGVPSRRGRGGGRPPPVCSGWSPPAKSLVPKKPPTGPLPPNKEPLKEKLISGPLSPMSRAGNMGVGMEDGERPRRRRHGRAQQQDKPPRFRRLKQDRENAARGTDGKPPPLTLPASTPAPTETLATVAAPPPPRRTAAKSPDLSNQNSDQANEEWETASESSDFASERRGDKETPPAALITSKAVGTPGGNSGGAGPGISTMSRGDLSQRAKDLSKRSFSSQRPGMDRQNRRPGAGGKTGGGGSSGGGGAGPGGRTGPGRGDKRSWPSPKNRSRPPEERPPGLPLPPPPPSSSAVFRLDQVIHSNPAGIQQALAQLSSRQGNVTAPGGHPRPKPGPPQAPQGSSPRPPTHYDPPRASNAISSDPHFEEPGPMVRGVGGTPRDSAGVNPFPPKRRERPPRKPELLQEETVPASHSSGFLGSKPEVPGPQEESRDSGTEALTPHIWNRLHTATSRKSYQPGSIEPWMEPLSPFEDVAGTEMSQSDSGVDLSGGSQVSSGPCSQRSSPDGGLKGSAEGPPRRPGGPSPLKAVPGESSSASEPSEPHRRRPPASHEGERKELPREQPLPPGPIGTERSQRTDRGPEPGPLRPAHRAGSQVEFGTTNKDSDLCLVVGDTLKGEKELAASATEAVPVSRDWELLPSASASAEPQAKSLGSGQCGPEPSPSGQRLYPEVFYGSPGPPNSQVSGGAPIDSQLHPSSGGFRPGTPSVHQYRSQPLYLPPGPAPPSALLSGVALKGQFLDFSALQATELGKLPAGGVLYPPPSFLYSAAFCPSPLPDPPLLQVRQDLPSPSDFYSTPLQPGGQSGFLPSGAPAQQMLLPVVDSQLPVVNFGSLPPAPPPAPPPLSLLPVGPALQPPNLAVRPPPAPAARVLPSPARPFPASLGRAELHPVELKPFQDYRKLSSNLGGPGSSRAPPSGRSFSGLNSRLKAPPSTYSGVFRTQRIDLYQQASPPDALRWMPKPWERTGPPSREGPPRRAEEPGPRGEKEPGLPPPR</sequence>
<evidence type="ECO:0000250" key="1"/>
<evidence type="ECO:0000250" key="2">
    <source>
        <dbReference type="UniProtKB" id="P48634"/>
    </source>
</evidence>
<evidence type="ECO:0000250" key="3">
    <source>
        <dbReference type="UniProtKB" id="Q7TSC1"/>
    </source>
</evidence>
<evidence type="ECO:0000256" key="4">
    <source>
        <dbReference type="SAM" id="MobiDB-lite"/>
    </source>
</evidence>
<evidence type="ECO:0007744" key="5">
    <source>
    </source>
</evidence>
<evidence type="ECO:0007744" key="6">
    <source>
    </source>
</evidence>
<organism>
    <name type="scientific">Rattus norvegicus</name>
    <name type="common">Rat</name>
    <dbReference type="NCBI Taxonomy" id="10116"/>
    <lineage>
        <taxon>Eukaryota</taxon>
        <taxon>Metazoa</taxon>
        <taxon>Chordata</taxon>
        <taxon>Craniata</taxon>
        <taxon>Vertebrata</taxon>
        <taxon>Euteleostomi</taxon>
        <taxon>Mammalia</taxon>
        <taxon>Eutheria</taxon>
        <taxon>Euarchontoglires</taxon>
        <taxon>Glires</taxon>
        <taxon>Rodentia</taxon>
        <taxon>Myomorpha</taxon>
        <taxon>Muroidea</taxon>
        <taxon>Muridae</taxon>
        <taxon>Murinae</taxon>
        <taxon>Rattus</taxon>
    </lineage>
</organism>